<feature type="signal peptide" evidence="1">
    <location>
        <begin position="1"/>
        <end position="21"/>
    </location>
</feature>
<feature type="chain" id="PRO_5000513227" description="Outer membrane protein assembly factor BamC">
    <location>
        <begin position="22"/>
        <end position="359"/>
    </location>
</feature>
<feature type="lipid moiety-binding region" description="N-palmitoyl cysteine" evidence="1">
    <location>
        <position position="22"/>
    </location>
</feature>
<feature type="lipid moiety-binding region" description="S-diacylglycerol cysteine" evidence="1">
    <location>
        <position position="22"/>
    </location>
</feature>
<organism>
    <name type="scientific">Kangiella koreensis (strain DSM 16069 / JCM 12317 / KCTC 12182 / SW-125)</name>
    <dbReference type="NCBI Taxonomy" id="523791"/>
    <lineage>
        <taxon>Bacteria</taxon>
        <taxon>Pseudomonadati</taxon>
        <taxon>Pseudomonadota</taxon>
        <taxon>Gammaproteobacteria</taxon>
        <taxon>Kangiellales</taxon>
        <taxon>Kangiellaceae</taxon>
        <taxon>Kangiella</taxon>
    </lineage>
</organism>
<name>BAMC_KANKD</name>
<dbReference type="EMBL" id="CP001707">
    <property type="protein sequence ID" value="ACV27038.1"/>
    <property type="molecule type" value="Genomic_DNA"/>
</dbReference>
<dbReference type="RefSeq" id="WP_015780644.1">
    <property type="nucleotide sequence ID" value="NC_013166.1"/>
</dbReference>
<dbReference type="STRING" id="523791.Kkor_1626"/>
<dbReference type="KEGG" id="kko:Kkor_1626"/>
<dbReference type="eggNOG" id="COG3317">
    <property type="taxonomic scope" value="Bacteria"/>
</dbReference>
<dbReference type="HOGENOM" id="CLU_063217_0_0_6"/>
<dbReference type="InParanoid" id="C7RCP6"/>
<dbReference type="OrthoDB" id="5598420at2"/>
<dbReference type="Proteomes" id="UP000001231">
    <property type="component" value="Chromosome"/>
</dbReference>
<dbReference type="GO" id="GO:0009279">
    <property type="term" value="C:cell outer membrane"/>
    <property type="evidence" value="ECO:0007669"/>
    <property type="project" value="UniProtKB-SubCell"/>
</dbReference>
<dbReference type="GO" id="GO:0043165">
    <property type="term" value="P:Gram-negative-bacterium-type cell outer membrane assembly"/>
    <property type="evidence" value="ECO:0007669"/>
    <property type="project" value="UniProtKB-UniRule"/>
</dbReference>
<dbReference type="GO" id="GO:0051205">
    <property type="term" value="P:protein insertion into membrane"/>
    <property type="evidence" value="ECO:0007669"/>
    <property type="project" value="UniProtKB-UniRule"/>
</dbReference>
<dbReference type="Gene3D" id="3.30.310.170">
    <property type="entry name" value="Outer membrane protein assembly factor BamC"/>
    <property type="match status" value="1"/>
</dbReference>
<dbReference type="HAMAP" id="MF_00924">
    <property type="entry name" value="OM_assembly_BamC"/>
    <property type="match status" value="1"/>
</dbReference>
<dbReference type="InterPro" id="IPR014524">
    <property type="entry name" value="BamC"/>
</dbReference>
<dbReference type="InterPro" id="IPR042268">
    <property type="entry name" value="BamC_C"/>
</dbReference>
<dbReference type="InterPro" id="IPR010653">
    <property type="entry name" value="NlpB/DapX"/>
</dbReference>
<dbReference type="Pfam" id="PF06804">
    <property type="entry name" value="Lipoprotein_18"/>
    <property type="match status" value="1"/>
</dbReference>
<dbReference type="PROSITE" id="PS51257">
    <property type="entry name" value="PROKAR_LIPOPROTEIN"/>
    <property type="match status" value="1"/>
</dbReference>
<comment type="function">
    <text evidence="1">Part of the outer membrane protein assembly complex, which is involved in assembly and insertion of beta-barrel proteins into the outer membrane.</text>
</comment>
<comment type="subunit">
    <text evidence="1">Part of the Bam complex.</text>
</comment>
<comment type="subcellular location">
    <subcellularLocation>
        <location evidence="1">Cell outer membrane</location>
        <topology evidence="1">Lipid-anchor</topology>
    </subcellularLocation>
</comment>
<comment type="similarity">
    <text evidence="1">Belongs to the BamC family.</text>
</comment>
<proteinExistence type="inferred from homology"/>
<gene>
    <name evidence="1" type="primary">bamC</name>
    <name type="ordered locus">Kkor_1626</name>
</gene>
<reference key="1">
    <citation type="journal article" date="2009" name="Stand. Genomic Sci.">
        <title>Complete genome sequence of Kangiella koreensis type strain (SW-125).</title>
        <authorList>
            <person name="Han C."/>
            <person name="Sikorski J."/>
            <person name="Lapidus A."/>
            <person name="Nolan M."/>
            <person name="Glavina Del Rio T."/>
            <person name="Tice H."/>
            <person name="Cheng J.F."/>
            <person name="Lucas S."/>
            <person name="Chen F."/>
            <person name="Copeland A."/>
            <person name="Ivanova N."/>
            <person name="Mavromatis K."/>
            <person name="Ovchinnikova G."/>
            <person name="Pati A."/>
            <person name="Bruce D."/>
            <person name="Goodwin L."/>
            <person name="Pitluck S."/>
            <person name="Chen A."/>
            <person name="Palaniappan K."/>
            <person name="Land M."/>
            <person name="Hauser L."/>
            <person name="Chang Y.J."/>
            <person name="Jeffries C.D."/>
            <person name="Chain P."/>
            <person name="Saunders E."/>
            <person name="Brettin T."/>
            <person name="Goker M."/>
            <person name="Tindall B.J."/>
            <person name="Bristow J."/>
            <person name="Eisen J.A."/>
            <person name="Markowitz V."/>
            <person name="Hugenholtz P."/>
            <person name="Kyrpides N.C."/>
            <person name="Klenk H.P."/>
            <person name="Detter J.C."/>
        </authorList>
    </citation>
    <scope>NUCLEOTIDE SEQUENCE [LARGE SCALE GENOMIC DNA]</scope>
    <source>
        <strain>DSM 16069 / JCM 12317 / KCTC 12182 / SW-125</strain>
    </source>
</reference>
<accession>C7RCP6</accession>
<keyword id="KW-0998">Cell outer membrane</keyword>
<keyword id="KW-0449">Lipoprotein</keyword>
<keyword id="KW-0472">Membrane</keyword>
<keyword id="KW-0564">Palmitate</keyword>
<keyword id="KW-1185">Reference proteome</keyword>
<keyword id="KW-0732">Signal</keyword>
<sequence length="359" mass="40614">MSTLNKYKTLIIISSLAAVSSCSWFSAKDGTEDIDDRYMKSQQDLELQVPPNVKQIEVQDRYRVPEGVIITNRNAKGKALSLDPPQLLLVGGDGVREDSEQSHPTVWVRHQDTPFMNYVSRFMMQKNIPVISSTEKQISSDWISDEDEDIFSQYIGSYNLDGQRHKVTLEIIGQNANEVAVQARNTQSQRLVDDKWVTMNTSKTVASQFLNAFLGFYDTERTKEARERILEEGTINVSLGTNSQGQIALIAERDLIAIWEHLPSVLEDLNLSVSDRDQSAGIYYFNVKEPETGFWAWLWGNDETNAKVDMEPGDYQIHLAATTYGVSMTFKDEEGNLLDSNLVTKIYPEFAASFKSRGK</sequence>
<protein>
    <recommendedName>
        <fullName evidence="1">Outer membrane protein assembly factor BamC</fullName>
    </recommendedName>
</protein>
<evidence type="ECO:0000255" key="1">
    <source>
        <dbReference type="HAMAP-Rule" id="MF_00924"/>
    </source>
</evidence>